<keyword id="KW-0067">ATP-binding</keyword>
<keyword id="KW-0963">Cytoplasm</keyword>
<keyword id="KW-0210">Decarboxylase</keyword>
<keyword id="KW-0312">Gluconeogenesis</keyword>
<keyword id="KW-0456">Lyase</keyword>
<keyword id="KW-0464">Manganese</keyword>
<keyword id="KW-0479">Metal-binding</keyword>
<keyword id="KW-0547">Nucleotide-binding</keyword>
<keyword id="KW-1185">Reference proteome</keyword>
<gene>
    <name evidence="1" type="primary">pckA</name>
    <name type="ordered locus">PSHAa0228</name>
</gene>
<evidence type="ECO:0000255" key="1">
    <source>
        <dbReference type="HAMAP-Rule" id="MF_00453"/>
    </source>
</evidence>
<accession>Q3ILP3</accession>
<feature type="chain" id="PRO_0000236932" description="Phosphoenolpyruvate carboxykinase (ATP)">
    <location>
        <begin position="1"/>
        <end position="513"/>
    </location>
</feature>
<feature type="binding site" evidence="1">
    <location>
        <position position="44"/>
    </location>
    <ligand>
        <name>substrate</name>
    </ligand>
</feature>
<feature type="binding site" evidence="1">
    <location>
        <position position="178"/>
    </location>
    <ligand>
        <name>substrate</name>
    </ligand>
</feature>
<feature type="binding site" evidence="1">
    <location>
        <position position="184"/>
    </location>
    <ligand>
        <name>ATP</name>
        <dbReference type="ChEBI" id="CHEBI:30616"/>
    </ligand>
</feature>
<feature type="binding site" evidence="1">
    <location>
        <position position="184"/>
    </location>
    <ligand>
        <name>Mn(2+)</name>
        <dbReference type="ChEBI" id="CHEBI:29035"/>
    </ligand>
</feature>
<feature type="binding site" evidence="1">
    <location>
        <position position="184"/>
    </location>
    <ligand>
        <name>substrate</name>
    </ligand>
</feature>
<feature type="binding site" evidence="1">
    <location>
        <position position="203"/>
    </location>
    <ligand>
        <name>ATP</name>
        <dbReference type="ChEBI" id="CHEBI:30616"/>
    </ligand>
</feature>
<feature type="binding site" evidence="1">
    <location>
        <position position="203"/>
    </location>
    <ligand>
        <name>Mn(2+)</name>
        <dbReference type="ChEBI" id="CHEBI:29035"/>
    </ligand>
</feature>
<feature type="binding site" evidence="1">
    <location>
        <begin position="219"/>
        <end position="227"/>
    </location>
    <ligand>
        <name>ATP</name>
        <dbReference type="ChEBI" id="CHEBI:30616"/>
    </ligand>
</feature>
<feature type="binding site" evidence="1">
    <location>
        <position position="240"/>
    </location>
    <ligand>
        <name>Mn(2+)</name>
        <dbReference type="ChEBI" id="CHEBI:29035"/>
    </ligand>
</feature>
<feature type="binding site" evidence="1">
    <location>
        <position position="268"/>
    </location>
    <ligand>
        <name>ATP</name>
        <dbReference type="ChEBI" id="CHEBI:30616"/>
    </ligand>
</feature>
<feature type="binding site" evidence="1">
    <location>
        <position position="304"/>
    </location>
    <ligand>
        <name>ATP</name>
        <dbReference type="ChEBI" id="CHEBI:30616"/>
    </ligand>
</feature>
<feature type="binding site" evidence="1">
    <location>
        <position position="304"/>
    </location>
    <ligand>
        <name>substrate</name>
    </ligand>
</feature>
<feature type="binding site" evidence="1">
    <location>
        <position position="430"/>
    </location>
    <ligand>
        <name>ATP</name>
        <dbReference type="ChEBI" id="CHEBI:30616"/>
    </ligand>
</feature>
<comment type="function">
    <text evidence="1">Involved in the gluconeogenesis. Catalyzes the conversion of oxaloacetate (OAA) to phosphoenolpyruvate (PEP) through direct phosphoryl transfer between the nucleoside triphosphate and OAA.</text>
</comment>
<comment type="catalytic activity">
    <reaction evidence="1">
        <text>oxaloacetate + ATP = phosphoenolpyruvate + ADP + CO2</text>
        <dbReference type="Rhea" id="RHEA:18617"/>
        <dbReference type="ChEBI" id="CHEBI:16452"/>
        <dbReference type="ChEBI" id="CHEBI:16526"/>
        <dbReference type="ChEBI" id="CHEBI:30616"/>
        <dbReference type="ChEBI" id="CHEBI:58702"/>
        <dbReference type="ChEBI" id="CHEBI:456216"/>
        <dbReference type="EC" id="4.1.1.49"/>
    </reaction>
</comment>
<comment type="cofactor">
    <cofactor evidence="1">
        <name>Mn(2+)</name>
        <dbReference type="ChEBI" id="CHEBI:29035"/>
    </cofactor>
    <text evidence="1">Binds 1 Mn(2+) ion per subunit.</text>
</comment>
<comment type="pathway">
    <text evidence="1">Carbohydrate biosynthesis; gluconeogenesis.</text>
</comment>
<comment type="subunit">
    <text evidence="1">Monomer.</text>
</comment>
<comment type="subcellular location">
    <subcellularLocation>
        <location evidence="1">Cytoplasm</location>
    </subcellularLocation>
</comment>
<comment type="similarity">
    <text evidence="1">Belongs to the phosphoenolpyruvate carboxykinase (ATP) family.</text>
</comment>
<sequence length="513" mass="56108">MTSSATRFVDLTAAELVEHAIRRGEGTLAANGAFVANTGHRTGRSPKDRFIVQESSTENEIQWGNVNRPFDADKFDALWARVEAYVQSNDHFISHLEVGADPEHYLPVVVTTETAWHHIFAKNMFIQPKSYNSSDVPQWQVMNVPSFVCEPERDGTNSDGTVLINFAQRKVLLAGMRYAGEMKKSMFSVQNFLLPAKGVLPMHCSANVGEAGDTALFFGLSGTGKTTLSADPTRFLIGDDEHGWAPGSVFNIEGGCYAKCIDLSQKNEPVIWDAIRFGTILENVVLDENRVPDFNDTSLTQNSRAAYPLEHVEKRKVENRAGEPKAVVFLTCDVSGVLPPVSILTEEAAAFHFLSGYTAKVGSTEIGSTSDIESTFSTCFGAPFFPRPAGVYAELLMKRVREFGAKVYLVNTGWTGGPYGTGKRFDIPTTRAVVDAIVSGKLVGVETQHIDVLNLDVPVAVPGVDSNLLNPINTWEDKAKYAEYAAKLAADFTENFTKYDVSDEIKNAGPKAQ</sequence>
<dbReference type="EC" id="4.1.1.49" evidence="1"/>
<dbReference type="EMBL" id="CR954246">
    <property type="protein sequence ID" value="CAI85331.1"/>
    <property type="molecule type" value="Genomic_DNA"/>
</dbReference>
<dbReference type="SMR" id="Q3ILP3"/>
<dbReference type="STRING" id="326442.PSHAa0228"/>
<dbReference type="KEGG" id="pha:PSHAa0228"/>
<dbReference type="PATRIC" id="fig|326442.8.peg.219"/>
<dbReference type="eggNOG" id="COG1866">
    <property type="taxonomic scope" value="Bacteria"/>
</dbReference>
<dbReference type="HOGENOM" id="CLU_018247_0_1_6"/>
<dbReference type="BioCyc" id="PHAL326442:PSHA_RS01125-MONOMER"/>
<dbReference type="UniPathway" id="UPA00138"/>
<dbReference type="Proteomes" id="UP000006843">
    <property type="component" value="Chromosome I"/>
</dbReference>
<dbReference type="GO" id="GO:0005829">
    <property type="term" value="C:cytosol"/>
    <property type="evidence" value="ECO:0007669"/>
    <property type="project" value="TreeGrafter"/>
</dbReference>
<dbReference type="GO" id="GO:0005524">
    <property type="term" value="F:ATP binding"/>
    <property type="evidence" value="ECO:0007669"/>
    <property type="project" value="UniProtKB-UniRule"/>
</dbReference>
<dbReference type="GO" id="GO:0046872">
    <property type="term" value="F:metal ion binding"/>
    <property type="evidence" value="ECO:0007669"/>
    <property type="project" value="UniProtKB-KW"/>
</dbReference>
<dbReference type="GO" id="GO:0004612">
    <property type="term" value="F:phosphoenolpyruvate carboxykinase (ATP) activity"/>
    <property type="evidence" value="ECO:0007669"/>
    <property type="project" value="UniProtKB-UniRule"/>
</dbReference>
<dbReference type="GO" id="GO:0006094">
    <property type="term" value="P:gluconeogenesis"/>
    <property type="evidence" value="ECO:0007669"/>
    <property type="project" value="UniProtKB-UniRule"/>
</dbReference>
<dbReference type="CDD" id="cd00484">
    <property type="entry name" value="PEPCK_ATP"/>
    <property type="match status" value="1"/>
</dbReference>
<dbReference type="FunFam" id="2.170.8.10:FF:000001">
    <property type="entry name" value="Phosphoenolpyruvate carboxykinase (ATP)"/>
    <property type="match status" value="1"/>
</dbReference>
<dbReference type="Gene3D" id="3.90.228.20">
    <property type="match status" value="1"/>
</dbReference>
<dbReference type="Gene3D" id="3.40.449.10">
    <property type="entry name" value="Phosphoenolpyruvate Carboxykinase, domain 1"/>
    <property type="match status" value="1"/>
</dbReference>
<dbReference type="Gene3D" id="2.170.8.10">
    <property type="entry name" value="Phosphoenolpyruvate Carboxykinase, domain 2"/>
    <property type="match status" value="1"/>
</dbReference>
<dbReference type="HAMAP" id="MF_00453">
    <property type="entry name" value="PEPCK_ATP"/>
    <property type="match status" value="1"/>
</dbReference>
<dbReference type="InterPro" id="IPR001272">
    <property type="entry name" value="PEP_carboxykinase_ATP"/>
</dbReference>
<dbReference type="InterPro" id="IPR013035">
    <property type="entry name" value="PEP_carboxykinase_C"/>
</dbReference>
<dbReference type="InterPro" id="IPR008210">
    <property type="entry name" value="PEP_carboxykinase_N"/>
</dbReference>
<dbReference type="InterPro" id="IPR015994">
    <property type="entry name" value="PEPCK_ATP_CS"/>
</dbReference>
<dbReference type="NCBIfam" id="TIGR00224">
    <property type="entry name" value="pckA"/>
    <property type="match status" value="1"/>
</dbReference>
<dbReference type="NCBIfam" id="NF006820">
    <property type="entry name" value="PRK09344.1-2"/>
    <property type="match status" value="1"/>
</dbReference>
<dbReference type="NCBIfam" id="NF006821">
    <property type="entry name" value="PRK09344.1-3"/>
    <property type="match status" value="1"/>
</dbReference>
<dbReference type="NCBIfam" id="NF006823">
    <property type="entry name" value="PRK09344.1-5"/>
    <property type="match status" value="1"/>
</dbReference>
<dbReference type="PANTHER" id="PTHR30031:SF0">
    <property type="entry name" value="PHOSPHOENOLPYRUVATE CARBOXYKINASE (ATP)"/>
    <property type="match status" value="1"/>
</dbReference>
<dbReference type="PANTHER" id="PTHR30031">
    <property type="entry name" value="PHOSPHOENOLPYRUVATE CARBOXYKINASE ATP"/>
    <property type="match status" value="1"/>
</dbReference>
<dbReference type="Pfam" id="PF01293">
    <property type="entry name" value="PEPCK_ATP"/>
    <property type="match status" value="1"/>
</dbReference>
<dbReference type="PIRSF" id="PIRSF006294">
    <property type="entry name" value="PEP_crbxkin"/>
    <property type="match status" value="1"/>
</dbReference>
<dbReference type="SUPFAM" id="SSF68923">
    <property type="entry name" value="PEP carboxykinase N-terminal domain"/>
    <property type="match status" value="1"/>
</dbReference>
<dbReference type="SUPFAM" id="SSF53795">
    <property type="entry name" value="PEP carboxykinase-like"/>
    <property type="match status" value="1"/>
</dbReference>
<dbReference type="PROSITE" id="PS00532">
    <property type="entry name" value="PEPCK_ATP"/>
    <property type="match status" value="1"/>
</dbReference>
<protein>
    <recommendedName>
        <fullName evidence="1">Phosphoenolpyruvate carboxykinase (ATP)</fullName>
        <shortName evidence="1">PCK</shortName>
        <shortName evidence="1">PEP carboxykinase</shortName>
        <shortName evidence="1">PEPCK</shortName>
        <ecNumber evidence="1">4.1.1.49</ecNumber>
    </recommendedName>
</protein>
<name>PCKA_PSET1</name>
<reference key="1">
    <citation type="journal article" date="2005" name="Genome Res.">
        <title>Coping with cold: the genome of the versatile marine Antarctica bacterium Pseudoalteromonas haloplanktis TAC125.</title>
        <authorList>
            <person name="Medigue C."/>
            <person name="Krin E."/>
            <person name="Pascal G."/>
            <person name="Barbe V."/>
            <person name="Bernsel A."/>
            <person name="Bertin P.N."/>
            <person name="Cheung F."/>
            <person name="Cruveiller S."/>
            <person name="D'Amico S."/>
            <person name="Duilio A."/>
            <person name="Fang G."/>
            <person name="Feller G."/>
            <person name="Ho C."/>
            <person name="Mangenot S."/>
            <person name="Marino G."/>
            <person name="Nilsson J."/>
            <person name="Parrilli E."/>
            <person name="Rocha E.P.C."/>
            <person name="Rouy Z."/>
            <person name="Sekowska A."/>
            <person name="Tutino M.L."/>
            <person name="Vallenet D."/>
            <person name="von Heijne G."/>
            <person name="Danchin A."/>
        </authorList>
    </citation>
    <scope>NUCLEOTIDE SEQUENCE [LARGE SCALE GENOMIC DNA]</scope>
    <source>
        <strain>TAC 125</strain>
    </source>
</reference>
<proteinExistence type="inferred from homology"/>
<organism>
    <name type="scientific">Pseudoalteromonas translucida (strain TAC 125)</name>
    <dbReference type="NCBI Taxonomy" id="326442"/>
    <lineage>
        <taxon>Bacteria</taxon>
        <taxon>Pseudomonadati</taxon>
        <taxon>Pseudomonadota</taxon>
        <taxon>Gammaproteobacteria</taxon>
        <taxon>Alteromonadales</taxon>
        <taxon>Pseudoalteromonadaceae</taxon>
        <taxon>Pseudoalteromonas</taxon>
    </lineage>
</organism>